<reference key="1">
    <citation type="journal article" date="2010" name="Genome Biol. Evol.">
        <title>Continuing evolution of Burkholderia mallei through genome reduction and large-scale rearrangements.</title>
        <authorList>
            <person name="Losada L."/>
            <person name="Ronning C.M."/>
            <person name="DeShazer D."/>
            <person name="Woods D."/>
            <person name="Fedorova N."/>
            <person name="Kim H.S."/>
            <person name="Shabalina S.A."/>
            <person name="Pearson T.R."/>
            <person name="Brinkac L."/>
            <person name="Tan P."/>
            <person name="Nandi T."/>
            <person name="Crabtree J."/>
            <person name="Badger J."/>
            <person name="Beckstrom-Sternberg S."/>
            <person name="Saqib M."/>
            <person name="Schutzer S.E."/>
            <person name="Keim P."/>
            <person name="Nierman W.C."/>
        </authorList>
    </citation>
    <scope>NUCLEOTIDE SEQUENCE [LARGE SCALE GENOMIC DNA]</scope>
    <source>
        <strain>1106a</strain>
    </source>
</reference>
<protein>
    <recommendedName>
        <fullName evidence="1">Putative phosphoenolpyruvate synthase regulatory protein</fullName>
        <shortName evidence="1">PEP synthase regulatory protein</shortName>
        <shortName evidence="1">PSRP</shortName>
        <ecNumber evidence="1">2.7.11.33</ecNumber>
        <ecNumber evidence="1">2.7.4.28</ecNumber>
    </recommendedName>
    <alternativeName>
        <fullName evidence="1">Pyruvate, water dikinase regulatory protein</fullName>
    </alternativeName>
</protein>
<feature type="chain" id="PRO_0000316650" description="Putative phosphoenolpyruvate synthase regulatory protein">
    <location>
        <begin position="1"/>
        <end position="271"/>
    </location>
</feature>
<feature type="binding site" evidence="1">
    <location>
        <begin position="151"/>
        <end position="158"/>
    </location>
    <ligand>
        <name>ADP</name>
        <dbReference type="ChEBI" id="CHEBI:456216"/>
    </ligand>
</feature>
<comment type="function">
    <text evidence="1">Bifunctional serine/threonine kinase and phosphorylase involved in the regulation of the phosphoenolpyruvate synthase (PEPS) by catalyzing its phosphorylation/dephosphorylation.</text>
</comment>
<comment type="catalytic activity">
    <reaction evidence="1">
        <text>[pyruvate, water dikinase] + ADP = [pyruvate, water dikinase]-phosphate + AMP + H(+)</text>
        <dbReference type="Rhea" id="RHEA:46020"/>
        <dbReference type="Rhea" id="RHEA-COMP:11425"/>
        <dbReference type="Rhea" id="RHEA-COMP:11426"/>
        <dbReference type="ChEBI" id="CHEBI:15378"/>
        <dbReference type="ChEBI" id="CHEBI:43176"/>
        <dbReference type="ChEBI" id="CHEBI:68546"/>
        <dbReference type="ChEBI" id="CHEBI:456215"/>
        <dbReference type="ChEBI" id="CHEBI:456216"/>
        <dbReference type="EC" id="2.7.11.33"/>
    </reaction>
</comment>
<comment type="catalytic activity">
    <reaction evidence="1">
        <text>[pyruvate, water dikinase]-phosphate + phosphate + H(+) = [pyruvate, water dikinase] + diphosphate</text>
        <dbReference type="Rhea" id="RHEA:48580"/>
        <dbReference type="Rhea" id="RHEA-COMP:11425"/>
        <dbReference type="Rhea" id="RHEA-COMP:11426"/>
        <dbReference type="ChEBI" id="CHEBI:15378"/>
        <dbReference type="ChEBI" id="CHEBI:33019"/>
        <dbReference type="ChEBI" id="CHEBI:43176"/>
        <dbReference type="ChEBI" id="CHEBI:43474"/>
        <dbReference type="ChEBI" id="CHEBI:68546"/>
        <dbReference type="EC" id="2.7.4.28"/>
    </reaction>
</comment>
<comment type="similarity">
    <text evidence="1">Belongs to the pyruvate, phosphate/water dikinase regulatory protein family. PSRP subfamily.</text>
</comment>
<accession>A3NWL4</accession>
<name>PSRP_BURP0</name>
<dbReference type="EC" id="2.7.11.33" evidence="1"/>
<dbReference type="EC" id="2.7.4.28" evidence="1"/>
<dbReference type="EMBL" id="CP000572">
    <property type="protein sequence ID" value="ABN90128.1"/>
    <property type="molecule type" value="Genomic_DNA"/>
</dbReference>
<dbReference type="RefSeq" id="WP_004192738.1">
    <property type="nucleotide sequence ID" value="NC_009076.1"/>
</dbReference>
<dbReference type="SMR" id="A3NWL4"/>
<dbReference type="KEGG" id="bpl:BURPS1106A_2476"/>
<dbReference type="HOGENOM" id="CLU_046206_1_0_4"/>
<dbReference type="Proteomes" id="UP000006738">
    <property type="component" value="Chromosome I"/>
</dbReference>
<dbReference type="GO" id="GO:0043531">
    <property type="term" value="F:ADP binding"/>
    <property type="evidence" value="ECO:0007669"/>
    <property type="project" value="UniProtKB-UniRule"/>
</dbReference>
<dbReference type="GO" id="GO:0005524">
    <property type="term" value="F:ATP binding"/>
    <property type="evidence" value="ECO:0007669"/>
    <property type="project" value="InterPro"/>
</dbReference>
<dbReference type="GO" id="GO:0016776">
    <property type="term" value="F:phosphotransferase activity, phosphate group as acceptor"/>
    <property type="evidence" value="ECO:0007669"/>
    <property type="project" value="UniProtKB-UniRule"/>
</dbReference>
<dbReference type="GO" id="GO:0004674">
    <property type="term" value="F:protein serine/threonine kinase activity"/>
    <property type="evidence" value="ECO:0007669"/>
    <property type="project" value="UniProtKB-UniRule"/>
</dbReference>
<dbReference type="HAMAP" id="MF_01062">
    <property type="entry name" value="PSRP"/>
    <property type="match status" value="1"/>
</dbReference>
<dbReference type="InterPro" id="IPR005177">
    <property type="entry name" value="Kinase-pyrophosphorylase"/>
</dbReference>
<dbReference type="InterPro" id="IPR026530">
    <property type="entry name" value="PSRP"/>
</dbReference>
<dbReference type="NCBIfam" id="NF003742">
    <property type="entry name" value="PRK05339.1"/>
    <property type="match status" value="1"/>
</dbReference>
<dbReference type="PANTHER" id="PTHR31756">
    <property type="entry name" value="PYRUVATE, PHOSPHATE DIKINASE REGULATORY PROTEIN 1, CHLOROPLASTIC"/>
    <property type="match status" value="1"/>
</dbReference>
<dbReference type="PANTHER" id="PTHR31756:SF3">
    <property type="entry name" value="PYRUVATE, PHOSPHATE DIKINASE REGULATORY PROTEIN 1, CHLOROPLASTIC"/>
    <property type="match status" value="1"/>
</dbReference>
<dbReference type="Pfam" id="PF03618">
    <property type="entry name" value="Kinase-PPPase"/>
    <property type="match status" value="1"/>
</dbReference>
<gene>
    <name type="ordered locus">BURPS1106A_2476</name>
</gene>
<evidence type="ECO:0000255" key="1">
    <source>
        <dbReference type="HAMAP-Rule" id="MF_01062"/>
    </source>
</evidence>
<keyword id="KW-0418">Kinase</keyword>
<keyword id="KW-0547">Nucleotide-binding</keyword>
<keyword id="KW-0723">Serine/threonine-protein kinase</keyword>
<keyword id="KW-0808">Transferase</keyword>
<organism>
    <name type="scientific">Burkholderia pseudomallei (strain 1106a)</name>
    <dbReference type="NCBI Taxonomy" id="357348"/>
    <lineage>
        <taxon>Bacteria</taxon>
        <taxon>Pseudomonadati</taxon>
        <taxon>Pseudomonadota</taxon>
        <taxon>Betaproteobacteria</taxon>
        <taxon>Burkholderiales</taxon>
        <taxon>Burkholderiaceae</taxon>
        <taxon>Burkholderia</taxon>
        <taxon>pseudomallei group</taxon>
    </lineage>
</organism>
<sequence>MLPTVFIVSDGTGITAETFAHSILSQFDQKFRLVRVPFIDSIEKAYDTVRKINDAAQHDGRRPIVFTTLVDGESNEIVKRSNALVLDMFQRFVEPLEQELQLKSSHAMGRVHQNADTEEYKTRIEAINFSLAHDDGQSNRNLADADVILIGVSRSGKTPTSLYLAMQYGVKAANYPLIPEDFERGKLPTPLHPHRDKLFGLSIDPMRLSEIRNERRPGSKYAAPENCRYEINEAEAMMRREGVKWLSSTHKSIEEIATTILQEIKLERQSY</sequence>
<proteinExistence type="inferred from homology"/>